<reference key="1">
    <citation type="journal article" date="1991" name="Mol. Microbiol.">
        <title>Molecular cloning and transcriptional analysis of the cpeBA operon of the cyanobacterium Pseudanabaena species PCC7409.</title>
        <authorList>
            <person name="Dubbs J.M."/>
            <person name="Bryant D.A."/>
        </authorList>
    </citation>
    <scope>NUCLEOTIDE SEQUENCE [GENOMIC DNA]</scope>
</reference>
<organism>
    <name type="scientific">Pseudanabaena tenuis (strain PCC 7409)</name>
    <dbReference type="NCBI Taxonomy" id="29415"/>
    <lineage>
        <taxon>Bacteria</taxon>
        <taxon>Bacillati</taxon>
        <taxon>Cyanobacteriota</taxon>
        <taxon>Cyanophyceae</taxon>
        <taxon>Pseudanabaenales</taxon>
        <taxon>Pseudanabaenaceae</taxon>
        <taxon>Pseudanabaena</taxon>
    </lineage>
</organism>
<dbReference type="EMBL" id="X63073">
    <property type="protein sequence ID" value="CAA44797.1"/>
    <property type="molecule type" value="Genomic_DNA"/>
</dbReference>
<dbReference type="SMR" id="P29300"/>
<dbReference type="GO" id="GO:0030089">
    <property type="term" value="C:phycobilisome"/>
    <property type="evidence" value="ECO:0007669"/>
    <property type="project" value="UniProtKB-KW"/>
</dbReference>
<dbReference type="GO" id="GO:0016491">
    <property type="term" value="F:oxidoreductase activity"/>
    <property type="evidence" value="ECO:0007669"/>
    <property type="project" value="TreeGrafter"/>
</dbReference>
<dbReference type="Gene3D" id="1.25.10.10">
    <property type="entry name" value="Leucine-rich Repeat Variant"/>
    <property type="match status" value="2"/>
</dbReference>
<dbReference type="InterPro" id="IPR011989">
    <property type="entry name" value="ARM-like"/>
</dbReference>
<dbReference type="InterPro" id="IPR016024">
    <property type="entry name" value="ARM-type_fold"/>
</dbReference>
<dbReference type="InterPro" id="IPR004155">
    <property type="entry name" value="PBS_lyase_HEAT"/>
</dbReference>
<dbReference type="PANTHER" id="PTHR12697:SF5">
    <property type="entry name" value="DEOXYHYPUSINE HYDROXYLASE"/>
    <property type="match status" value="1"/>
</dbReference>
<dbReference type="PANTHER" id="PTHR12697">
    <property type="entry name" value="PBS LYASE HEAT-LIKE PROTEIN"/>
    <property type="match status" value="1"/>
</dbReference>
<dbReference type="Pfam" id="PF13646">
    <property type="entry name" value="HEAT_2"/>
    <property type="match status" value="2"/>
</dbReference>
<dbReference type="SMART" id="SM00567">
    <property type="entry name" value="EZ_HEAT"/>
    <property type="match status" value="4"/>
</dbReference>
<dbReference type="SUPFAM" id="SSF48371">
    <property type="entry name" value="ARM repeat"/>
    <property type="match status" value="1"/>
</dbReference>
<keyword id="KW-0042">Antenna complex</keyword>
<keyword id="KW-0605">Phycobilisome</keyword>
<comment type="induction">
    <text>Present in both red- and green-light-grown cells.</text>
</comment>
<protein>
    <recommendedName>
        <fullName>Uncharacterized phycocyanin operon protein Z</fullName>
    </recommendedName>
    <alternativeName>
        <fullName>ORF Z</fullName>
    </alternativeName>
</protein>
<accession>P29300</accession>
<feature type="chain" id="PRO_0000199288" description="Uncharacterized phycocyanin operon protein Z">
    <location>
        <begin position="1"/>
        <end position="202"/>
    </location>
</feature>
<proteinExistence type="evidence at transcript level"/>
<name>YCPZ_PSETP</name>
<sequence length="202" mass="21516">MSIETFFQQLKHPNPNVRNQGMWGIADNYDAEVINRLMALLDEEDTTYRRAAVKTLGAIGHASVTPLVAALLNSDNMTVRSSAAKALAQVVICHPDEPLSEEGVQGLKAALQDPNPVVNIASVMAMGEIGAPVVHLLIEALQTTENPALAVSLVNAIASTGDSRGIDVLQAIINDEAADSYVRETATSAISRLEMVAGFKRN</sequence>